<dbReference type="EMBL" id="AE002098">
    <property type="protein sequence ID" value="AAF40587.1"/>
    <property type="molecule type" value="Genomic_DNA"/>
</dbReference>
<dbReference type="PIR" id="E81235">
    <property type="entry name" value="E81235"/>
</dbReference>
<dbReference type="RefSeq" id="NP_273186.1">
    <property type="nucleotide sequence ID" value="NC_003112.2"/>
</dbReference>
<dbReference type="RefSeq" id="WP_002218415.1">
    <property type="nucleotide sequence ID" value="NC_003112.2"/>
</dbReference>
<dbReference type="SMR" id="P66088"/>
<dbReference type="FunCoup" id="P66088">
    <property type="interactions" value="618"/>
</dbReference>
<dbReference type="STRING" id="122586.NMB0128"/>
<dbReference type="PaxDb" id="122586-NMB0128"/>
<dbReference type="GeneID" id="93387204"/>
<dbReference type="KEGG" id="nme:NMB0128"/>
<dbReference type="PATRIC" id="fig|122586.8.peg.168"/>
<dbReference type="HOGENOM" id="CLU_062853_0_0_4"/>
<dbReference type="InParanoid" id="P66088"/>
<dbReference type="OrthoDB" id="9803740at2"/>
<dbReference type="Proteomes" id="UP000000425">
    <property type="component" value="Chromosome"/>
</dbReference>
<dbReference type="GO" id="GO:0022625">
    <property type="term" value="C:cytosolic large ribosomal subunit"/>
    <property type="evidence" value="ECO:0000318"/>
    <property type="project" value="GO_Central"/>
</dbReference>
<dbReference type="GO" id="GO:0019843">
    <property type="term" value="F:rRNA binding"/>
    <property type="evidence" value="ECO:0007669"/>
    <property type="project" value="UniProtKB-UniRule"/>
</dbReference>
<dbReference type="GO" id="GO:0003735">
    <property type="term" value="F:structural constituent of ribosome"/>
    <property type="evidence" value="ECO:0007669"/>
    <property type="project" value="InterPro"/>
</dbReference>
<dbReference type="GO" id="GO:0000049">
    <property type="term" value="F:tRNA binding"/>
    <property type="evidence" value="ECO:0007669"/>
    <property type="project" value="UniProtKB-KW"/>
</dbReference>
<dbReference type="GO" id="GO:0006417">
    <property type="term" value="P:regulation of translation"/>
    <property type="evidence" value="ECO:0007669"/>
    <property type="project" value="UniProtKB-KW"/>
</dbReference>
<dbReference type="GO" id="GO:0006412">
    <property type="term" value="P:translation"/>
    <property type="evidence" value="ECO:0007669"/>
    <property type="project" value="UniProtKB-UniRule"/>
</dbReference>
<dbReference type="CDD" id="cd00403">
    <property type="entry name" value="Ribosomal_L1"/>
    <property type="match status" value="1"/>
</dbReference>
<dbReference type="FunFam" id="3.40.50.790:FF:000001">
    <property type="entry name" value="50S ribosomal protein L1"/>
    <property type="match status" value="1"/>
</dbReference>
<dbReference type="Gene3D" id="3.30.190.20">
    <property type="match status" value="1"/>
</dbReference>
<dbReference type="Gene3D" id="3.40.50.790">
    <property type="match status" value="1"/>
</dbReference>
<dbReference type="HAMAP" id="MF_01318_B">
    <property type="entry name" value="Ribosomal_uL1_B"/>
    <property type="match status" value="1"/>
</dbReference>
<dbReference type="InterPro" id="IPR005878">
    <property type="entry name" value="Ribosom_uL1_bac-type"/>
</dbReference>
<dbReference type="InterPro" id="IPR002143">
    <property type="entry name" value="Ribosomal_uL1"/>
</dbReference>
<dbReference type="InterPro" id="IPR023674">
    <property type="entry name" value="Ribosomal_uL1-like"/>
</dbReference>
<dbReference type="InterPro" id="IPR028364">
    <property type="entry name" value="Ribosomal_uL1/biogenesis"/>
</dbReference>
<dbReference type="InterPro" id="IPR016095">
    <property type="entry name" value="Ribosomal_uL1_3-a/b-sand"/>
</dbReference>
<dbReference type="InterPro" id="IPR023673">
    <property type="entry name" value="Ribosomal_uL1_CS"/>
</dbReference>
<dbReference type="NCBIfam" id="TIGR01169">
    <property type="entry name" value="rplA_bact"/>
    <property type="match status" value="1"/>
</dbReference>
<dbReference type="PANTHER" id="PTHR36427">
    <property type="entry name" value="54S RIBOSOMAL PROTEIN L1, MITOCHONDRIAL"/>
    <property type="match status" value="1"/>
</dbReference>
<dbReference type="PANTHER" id="PTHR36427:SF3">
    <property type="entry name" value="LARGE RIBOSOMAL SUBUNIT PROTEIN UL1M"/>
    <property type="match status" value="1"/>
</dbReference>
<dbReference type="Pfam" id="PF00687">
    <property type="entry name" value="Ribosomal_L1"/>
    <property type="match status" value="1"/>
</dbReference>
<dbReference type="PIRSF" id="PIRSF002155">
    <property type="entry name" value="Ribosomal_L1"/>
    <property type="match status" value="1"/>
</dbReference>
<dbReference type="SUPFAM" id="SSF56808">
    <property type="entry name" value="Ribosomal protein L1"/>
    <property type="match status" value="1"/>
</dbReference>
<dbReference type="PROSITE" id="PS01199">
    <property type="entry name" value="RIBOSOMAL_L1"/>
    <property type="match status" value="1"/>
</dbReference>
<protein>
    <recommendedName>
        <fullName evidence="1">Large ribosomal subunit protein uL1</fullName>
    </recommendedName>
    <alternativeName>
        <fullName evidence="2">50S ribosomal protein L1</fullName>
    </alternativeName>
</protein>
<name>RL1_NEIMB</name>
<accession>P66088</accession>
<accession>Q9JRJ1</accession>
<comment type="function">
    <text evidence="1">Binds directly to 23S rRNA. The L1 stalk is quite mobile in the ribosome, and is involved in E site tRNA release.</text>
</comment>
<comment type="function">
    <text evidence="1">Protein L1 is also a translational repressor protein, it controls the translation of the L11 operon by binding to its mRNA.</text>
</comment>
<comment type="subunit">
    <text evidence="1">Part of the 50S ribosomal subunit.</text>
</comment>
<comment type="similarity">
    <text evidence="1">Belongs to the universal ribosomal protein uL1 family.</text>
</comment>
<feature type="chain" id="PRO_0000125699" description="Large ribosomal subunit protein uL1">
    <location>
        <begin position="1"/>
        <end position="231"/>
    </location>
</feature>
<evidence type="ECO:0000255" key="1">
    <source>
        <dbReference type="HAMAP-Rule" id="MF_01318"/>
    </source>
</evidence>
<evidence type="ECO:0000305" key="2"/>
<organism>
    <name type="scientific">Neisseria meningitidis serogroup B (strain ATCC BAA-335 / MC58)</name>
    <dbReference type="NCBI Taxonomy" id="122586"/>
    <lineage>
        <taxon>Bacteria</taxon>
        <taxon>Pseudomonadati</taxon>
        <taxon>Pseudomonadota</taxon>
        <taxon>Betaproteobacteria</taxon>
        <taxon>Neisseriales</taxon>
        <taxon>Neisseriaceae</taxon>
        <taxon>Neisseria</taxon>
    </lineage>
</organism>
<sequence length="231" mass="24102">MAKVSKRLKALRSSVEANKLYAIDEAIALVKKAATAKFDESVDVSFNLGVDPRKSDQVIRGSVVLPKGTGKITRVAVFTQGANAEAAKEAGADIVGFEDLAAEIKAGNLNFDVVIASPDAMRIVGQLGTILGPRGLMPNPKVGTVTPNVAEAVKNAKAGQVQYRTDKAGIVHATIGRASFAEADLKENFDALLDAIVKAKPAAAKGQYLKKVAVSSTMGLGIRVDTSSVNN</sequence>
<keyword id="KW-1185">Reference proteome</keyword>
<keyword id="KW-0678">Repressor</keyword>
<keyword id="KW-0687">Ribonucleoprotein</keyword>
<keyword id="KW-0689">Ribosomal protein</keyword>
<keyword id="KW-0694">RNA-binding</keyword>
<keyword id="KW-0699">rRNA-binding</keyword>
<keyword id="KW-0810">Translation regulation</keyword>
<keyword id="KW-0820">tRNA-binding</keyword>
<reference key="1">
    <citation type="journal article" date="2000" name="Science">
        <title>Complete genome sequence of Neisseria meningitidis serogroup B strain MC58.</title>
        <authorList>
            <person name="Tettelin H."/>
            <person name="Saunders N.J."/>
            <person name="Heidelberg J.F."/>
            <person name="Jeffries A.C."/>
            <person name="Nelson K.E."/>
            <person name="Eisen J.A."/>
            <person name="Ketchum K.A."/>
            <person name="Hood D.W."/>
            <person name="Peden J.F."/>
            <person name="Dodson R.J."/>
            <person name="Nelson W.C."/>
            <person name="Gwinn M.L."/>
            <person name="DeBoy R.T."/>
            <person name="Peterson J.D."/>
            <person name="Hickey E.K."/>
            <person name="Haft D.H."/>
            <person name="Salzberg S.L."/>
            <person name="White O."/>
            <person name="Fleischmann R.D."/>
            <person name="Dougherty B.A."/>
            <person name="Mason T.M."/>
            <person name="Ciecko A."/>
            <person name="Parksey D.S."/>
            <person name="Blair E."/>
            <person name="Cittone H."/>
            <person name="Clark E.B."/>
            <person name="Cotton M.D."/>
            <person name="Utterback T.R."/>
            <person name="Khouri H.M."/>
            <person name="Qin H."/>
            <person name="Vamathevan J.J."/>
            <person name="Gill J."/>
            <person name="Scarlato V."/>
            <person name="Masignani V."/>
            <person name="Pizza M."/>
            <person name="Grandi G."/>
            <person name="Sun L."/>
            <person name="Smith H.O."/>
            <person name="Fraser C.M."/>
            <person name="Moxon E.R."/>
            <person name="Rappuoli R."/>
            <person name="Venter J.C."/>
        </authorList>
    </citation>
    <scope>NUCLEOTIDE SEQUENCE [LARGE SCALE GENOMIC DNA]</scope>
    <source>
        <strain>ATCC BAA-335 / MC58</strain>
    </source>
</reference>
<proteinExistence type="inferred from homology"/>
<gene>
    <name evidence="1" type="primary">rplA</name>
    <name type="ordered locus">NMB0128</name>
</gene>